<keyword id="KW-1185">Reference proteome</keyword>
<proteinExistence type="predicted"/>
<accession>Q9ZE16</accession>
<name>Y146_RICPR</name>
<protein>
    <recommendedName>
        <fullName>Uncharacterized protein RP146</fullName>
    </recommendedName>
</protein>
<gene>
    <name type="ordered locus">RP146</name>
</gene>
<reference key="1">
    <citation type="journal article" date="1998" name="Nature">
        <title>The genome sequence of Rickettsia prowazekii and the origin of mitochondria.</title>
        <authorList>
            <person name="Andersson S.G.E."/>
            <person name="Zomorodipour A."/>
            <person name="Andersson J.O."/>
            <person name="Sicheritz-Ponten T."/>
            <person name="Alsmark U.C.M."/>
            <person name="Podowski R.M."/>
            <person name="Naeslund A.K."/>
            <person name="Eriksson A.-S."/>
            <person name="Winkler H.H."/>
            <person name="Kurland C.G."/>
        </authorList>
    </citation>
    <scope>NUCLEOTIDE SEQUENCE [LARGE SCALE GENOMIC DNA]</scope>
    <source>
        <strain>Madrid E</strain>
    </source>
</reference>
<feature type="chain" id="PRO_0000101320" description="Uncharacterized protein RP146">
    <location>
        <begin position="1"/>
        <end position="612"/>
    </location>
</feature>
<organism>
    <name type="scientific">Rickettsia prowazekii (strain Madrid E)</name>
    <dbReference type="NCBI Taxonomy" id="272947"/>
    <lineage>
        <taxon>Bacteria</taxon>
        <taxon>Pseudomonadati</taxon>
        <taxon>Pseudomonadota</taxon>
        <taxon>Alphaproteobacteria</taxon>
        <taxon>Rickettsiales</taxon>
        <taxon>Rickettsiaceae</taxon>
        <taxon>Rickettsieae</taxon>
        <taxon>Rickettsia</taxon>
        <taxon>typhus group</taxon>
    </lineage>
</organism>
<dbReference type="EMBL" id="AJ235270">
    <property type="protein sequence ID" value="CAA14614.1"/>
    <property type="molecule type" value="Genomic_DNA"/>
</dbReference>
<dbReference type="PIR" id="G71724">
    <property type="entry name" value="G71724"/>
</dbReference>
<dbReference type="RefSeq" id="NP_220537.1">
    <property type="nucleotide sequence ID" value="NC_000963.1"/>
</dbReference>
<dbReference type="STRING" id="272947.gene:17555229"/>
<dbReference type="EnsemblBacteria" id="CAA14614">
    <property type="protein sequence ID" value="CAA14614"/>
    <property type="gene ID" value="CAA14614"/>
</dbReference>
<dbReference type="KEGG" id="rpr:RP146"/>
<dbReference type="PATRIC" id="fig|272947.5.peg.151"/>
<dbReference type="eggNOG" id="ENOG50312Z2">
    <property type="taxonomic scope" value="Bacteria"/>
</dbReference>
<dbReference type="HOGENOM" id="CLU_024187_0_0_5"/>
<dbReference type="OrthoDB" id="7160915at2"/>
<dbReference type="Proteomes" id="UP000002480">
    <property type="component" value="Chromosome"/>
</dbReference>
<sequence>MTLFLHYHIAIKYITFVNISIFMSKEKITRELLLQQELFKALKTHDIAANAKISRICRRIAGSVIALARQQSHTTENLYTHYINQAAFNTKDLAKVTTIIKNLFPGDKNKKLREIIDTPLLQNLVIEGSIERKIELNDPQYNTNYRKFEEIIDPNETKKVIDAMLRDKRVAQQDEFEETGKKTAGISAGYVANDSTGNTFILKHFYKTHAACKKIQDPKEQDQAITDRRDGVQELIGSTMYQFLLHDRAPKEGLVNADEQHPDSLYVRSKFFDNAVTLAEFCGLSGLTRVRINDKNLKRLEGFEKAIAACHILGDGDYHAGNLMVQNGKTITKIDHGRSFLEFHKDFASMIQSTAEMFIHPHVCYSYAIKAGNLSFNIDKYSEALNQMINQFDLKHMEAIVDQKLDELKKAGFDPNKIPLSINIKNFDDLKKYYKTHIKQNIINMQEVAKGAEIVKKFSNVLPSFKNGGWLEAFANSPIKEPLLYAIENNITIEGKDAQEWAYENNYQIKTAIGLTKETIKEQQWSKDFEGKWQEREVEIQRDKVEIQLSDPLKSIRIQDKFTAEKLGSLIVNFTKHTTTKNVTDKEVAKFYDNIMKVLKKSIILPSKMLKL</sequence>